<protein>
    <recommendedName>
        <fullName>Cytochrome b</fullName>
    </recommendedName>
    <alternativeName>
        <fullName>Complex III subunit 3</fullName>
    </alternativeName>
    <alternativeName>
        <fullName>Complex III subunit III</fullName>
    </alternativeName>
    <alternativeName>
        <fullName>Cytochrome b-c1 complex subunit 3</fullName>
    </alternativeName>
    <alternativeName>
        <fullName>Ubiquinol-cytochrome-c reductase complex cytochrome b subunit</fullName>
    </alternativeName>
</protein>
<name>CYB_SACPA</name>
<feature type="chain" id="PRO_0000061757" description="Cytochrome b">
    <location>
        <begin position="1"/>
        <end position="385"/>
    </location>
</feature>
<feature type="transmembrane region" description="Helical" evidence="3">
    <location>
        <begin position="32"/>
        <end position="52"/>
    </location>
</feature>
<feature type="transmembrane region" description="Helical" evidence="3">
    <location>
        <begin position="76"/>
        <end position="98"/>
    </location>
</feature>
<feature type="transmembrane region" description="Helical" evidence="3">
    <location>
        <begin position="113"/>
        <end position="133"/>
    </location>
</feature>
<feature type="transmembrane region" description="Helical" evidence="3">
    <location>
        <begin position="179"/>
        <end position="199"/>
    </location>
</feature>
<feature type="transmembrane region" description="Helical" evidence="3">
    <location>
        <begin position="225"/>
        <end position="245"/>
    </location>
</feature>
<feature type="transmembrane region" description="Helical" evidence="3">
    <location>
        <begin position="289"/>
        <end position="309"/>
    </location>
</feature>
<feature type="transmembrane region" description="Helical" evidence="3">
    <location>
        <begin position="321"/>
        <end position="341"/>
    </location>
</feature>
<feature type="transmembrane region" description="Helical" evidence="3">
    <location>
        <begin position="348"/>
        <end position="368"/>
    </location>
</feature>
<feature type="binding site" description="axial binding residue" evidence="5">
    <location>
        <position position="82"/>
    </location>
    <ligand>
        <name>heme b</name>
        <dbReference type="ChEBI" id="CHEBI:60344"/>
        <label>b562</label>
    </ligand>
    <ligandPart>
        <name>Fe</name>
        <dbReference type="ChEBI" id="CHEBI:18248"/>
    </ligandPart>
</feature>
<feature type="binding site" description="axial binding residue" evidence="5">
    <location>
        <position position="96"/>
    </location>
    <ligand>
        <name>heme b</name>
        <dbReference type="ChEBI" id="CHEBI:60344"/>
        <label>b566</label>
    </ligand>
    <ligandPart>
        <name>Fe</name>
        <dbReference type="ChEBI" id="CHEBI:18248"/>
    </ligandPart>
</feature>
<feature type="binding site" description="axial binding residue" evidence="5">
    <location>
        <position position="183"/>
    </location>
    <ligand>
        <name>heme b</name>
        <dbReference type="ChEBI" id="CHEBI:60344"/>
        <label>b562</label>
    </ligand>
    <ligandPart>
        <name>Fe</name>
        <dbReference type="ChEBI" id="CHEBI:18248"/>
    </ligandPart>
</feature>
<feature type="binding site" description="axial binding residue" evidence="5">
    <location>
        <position position="197"/>
    </location>
    <ligand>
        <name>heme b</name>
        <dbReference type="ChEBI" id="CHEBI:60344"/>
        <label>b566</label>
    </ligand>
    <ligandPart>
        <name>Fe</name>
        <dbReference type="ChEBI" id="CHEBI:18248"/>
    </ligandPart>
</feature>
<feature type="binding site" evidence="2">
    <location>
        <position position="202"/>
    </location>
    <ligand>
        <name>a ubiquinone</name>
        <dbReference type="ChEBI" id="CHEBI:16389"/>
    </ligand>
</feature>
<sequence length="385" mass="43631">MAFRKSNVYLSLVNSYTIDSPQPSSINYWWKMGSLLGLCLVIQIVTGIFMAMHYSSNIELAFSSVEHIMRDVHSGYILRYLHANGASFFFMVMFMHMAKGLYYGSYRSPRVTLWNVGVIIFILTIATAFLGYCCVYGQMSHWGATVITNLFSAIPFVGNDIVSWLWGGFSVSNPTIQRFFALHYLVPFIIAAMVIMHLMALHIHGSSNPLGITGNLDRIPMHSYFIFKDLVTVFLFMLILALFVFYSPNTLGHPDNYIPGNPLVTPASIVPEWYLLPFYAILRSIPDKLLGVITMFAAILVLLVLPFTDRSVVRGNTFKVLSKFFFFIFVFNFVLLGQIGACHVEVPYVLMGQIATFIYFAYFLIIVPVISTIENVLFYIGRVNK</sequence>
<accession>Q35819</accession>
<reference key="1">
    <citation type="journal article" date="1991" name="J. Mol. Biol.">
        <title>Incipient mitochondrial evolution in yeasts. II. The complete sequence of the gene coding for cytochrome b in Saccharomyces douglasii reveals the presence of both new and conserved introns and discloses major differences in the fixation of mutations in evolution.</title>
        <authorList>
            <person name="Tian G.L."/>
            <person name="Michel F."/>
            <person name="Macadre C."/>
            <person name="Slonimski P.P."/>
            <person name="Lazowska J."/>
        </authorList>
    </citation>
    <scope>NUCLEOTIDE SEQUENCE [GENOMIC DNA]</scope>
</reference>
<gene>
    <name type="primary">COB</name>
    <name type="synonym">CYTB</name>
</gene>
<geneLocation type="mitochondrion"/>
<organism>
    <name type="scientific">Saccharomyces paradoxus</name>
    <name type="common">Yeast</name>
    <name type="synonym">Saccharomyces douglasii</name>
    <dbReference type="NCBI Taxonomy" id="27291"/>
    <lineage>
        <taxon>Eukaryota</taxon>
        <taxon>Fungi</taxon>
        <taxon>Dikarya</taxon>
        <taxon>Ascomycota</taxon>
        <taxon>Saccharomycotina</taxon>
        <taxon>Saccharomycetes</taxon>
        <taxon>Saccharomycetales</taxon>
        <taxon>Saccharomycetaceae</taxon>
        <taxon>Saccharomyces</taxon>
    </lineage>
</organism>
<comment type="function">
    <text evidence="3">Component of the ubiquinol-cytochrome c reductase complex (complex III or cytochrome b-c1 complex) that is part of the mitochondrial respiratory chain. The b-c1 complex mediates electron transfer from ubiquinol to cytochrome c. Contributes to the generation of a proton gradient across the mitochondrial membrane that is then used for ATP synthesis.</text>
</comment>
<comment type="cofactor">
    <cofactor evidence="3">
        <name>heme b</name>
        <dbReference type="ChEBI" id="CHEBI:60344"/>
    </cofactor>
    <text evidence="3">Binds 2 heme b groups non-covalently.</text>
</comment>
<comment type="subunit">
    <text evidence="3">Fungal cytochrome b-c1 complex contains 10 subunits; 3 respiratory subunits, 2 core proteins and 5 low-molecular weight proteins. Cytochrome b-c1 complex is a homodimer.</text>
</comment>
<comment type="subcellular location">
    <subcellularLocation>
        <location evidence="3">Mitochondrion inner membrane</location>
        <topology evidence="3">Multi-pass membrane protein</topology>
    </subcellularLocation>
</comment>
<comment type="miscellaneous">
    <text evidence="1">Heme 1 (or BL or b562) is low-potential and absorbs at about 562 nm, and heme 2 (or BH or b566) is high-potential and absorbs at about 566 nm.</text>
</comment>
<comment type="similarity">
    <text evidence="4 5">Belongs to the cytochrome b family.</text>
</comment>
<comment type="caution">
    <text evidence="3">The protein contains only eight transmembrane helices, not nine as predicted by bioinformatics tools.</text>
</comment>
<proteinExistence type="inferred from homology"/>
<dbReference type="EMBL" id="X59280">
    <property type="protein sequence ID" value="CAA41971.1"/>
    <property type="molecule type" value="Genomic_DNA"/>
</dbReference>
<dbReference type="SMR" id="Q35819"/>
<dbReference type="GO" id="GO:0005743">
    <property type="term" value="C:mitochondrial inner membrane"/>
    <property type="evidence" value="ECO:0007669"/>
    <property type="project" value="UniProtKB-SubCell"/>
</dbReference>
<dbReference type="GO" id="GO:0045275">
    <property type="term" value="C:respiratory chain complex III"/>
    <property type="evidence" value="ECO:0007669"/>
    <property type="project" value="InterPro"/>
</dbReference>
<dbReference type="GO" id="GO:0046872">
    <property type="term" value="F:metal ion binding"/>
    <property type="evidence" value="ECO:0007669"/>
    <property type="project" value="UniProtKB-KW"/>
</dbReference>
<dbReference type="GO" id="GO:0008121">
    <property type="term" value="F:ubiquinol-cytochrome-c reductase activity"/>
    <property type="evidence" value="ECO:0007669"/>
    <property type="project" value="InterPro"/>
</dbReference>
<dbReference type="GO" id="GO:0006122">
    <property type="term" value="P:mitochondrial electron transport, ubiquinol to cytochrome c"/>
    <property type="evidence" value="ECO:0007669"/>
    <property type="project" value="TreeGrafter"/>
</dbReference>
<dbReference type="CDD" id="cd00290">
    <property type="entry name" value="cytochrome_b_C"/>
    <property type="match status" value="1"/>
</dbReference>
<dbReference type="CDD" id="cd00284">
    <property type="entry name" value="Cytochrome_b_N"/>
    <property type="match status" value="1"/>
</dbReference>
<dbReference type="FunFam" id="1.20.810.10:FF:000002">
    <property type="entry name" value="Cytochrome b"/>
    <property type="match status" value="1"/>
</dbReference>
<dbReference type="Gene3D" id="1.20.810.10">
    <property type="entry name" value="Cytochrome Bc1 Complex, Chain C"/>
    <property type="match status" value="1"/>
</dbReference>
<dbReference type="InterPro" id="IPR005798">
    <property type="entry name" value="Cyt_b/b6_C"/>
</dbReference>
<dbReference type="InterPro" id="IPR036150">
    <property type="entry name" value="Cyt_b/b6_C_sf"/>
</dbReference>
<dbReference type="InterPro" id="IPR005797">
    <property type="entry name" value="Cyt_b/b6_N"/>
</dbReference>
<dbReference type="InterPro" id="IPR027387">
    <property type="entry name" value="Cytb/b6-like_sf"/>
</dbReference>
<dbReference type="InterPro" id="IPR030689">
    <property type="entry name" value="Cytochrome_b"/>
</dbReference>
<dbReference type="InterPro" id="IPR048260">
    <property type="entry name" value="Cytochrome_b_C_euk/bac"/>
</dbReference>
<dbReference type="InterPro" id="IPR048259">
    <property type="entry name" value="Cytochrome_b_N_euk/bac"/>
</dbReference>
<dbReference type="InterPro" id="IPR016174">
    <property type="entry name" value="Di-haem_cyt_TM"/>
</dbReference>
<dbReference type="PANTHER" id="PTHR19271">
    <property type="entry name" value="CYTOCHROME B"/>
    <property type="match status" value="1"/>
</dbReference>
<dbReference type="PANTHER" id="PTHR19271:SF16">
    <property type="entry name" value="CYTOCHROME B"/>
    <property type="match status" value="1"/>
</dbReference>
<dbReference type="Pfam" id="PF00032">
    <property type="entry name" value="Cytochrom_B_C"/>
    <property type="match status" value="1"/>
</dbReference>
<dbReference type="Pfam" id="PF00033">
    <property type="entry name" value="Cytochrome_B"/>
    <property type="match status" value="1"/>
</dbReference>
<dbReference type="PIRSF" id="PIRSF038885">
    <property type="entry name" value="COB"/>
    <property type="match status" value="1"/>
</dbReference>
<dbReference type="SUPFAM" id="SSF81648">
    <property type="entry name" value="a domain/subunit of cytochrome bc1 complex (Ubiquinol-cytochrome c reductase)"/>
    <property type="match status" value="1"/>
</dbReference>
<dbReference type="SUPFAM" id="SSF81342">
    <property type="entry name" value="Transmembrane di-heme cytochromes"/>
    <property type="match status" value="1"/>
</dbReference>
<dbReference type="PROSITE" id="PS51003">
    <property type="entry name" value="CYTB_CTER"/>
    <property type="match status" value="1"/>
</dbReference>
<dbReference type="PROSITE" id="PS51002">
    <property type="entry name" value="CYTB_NTER"/>
    <property type="match status" value="1"/>
</dbReference>
<evidence type="ECO:0000250" key="1"/>
<evidence type="ECO:0000250" key="2">
    <source>
        <dbReference type="UniProtKB" id="P00157"/>
    </source>
</evidence>
<evidence type="ECO:0000250" key="3">
    <source>
        <dbReference type="UniProtKB" id="P00163"/>
    </source>
</evidence>
<evidence type="ECO:0000255" key="4">
    <source>
        <dbReference type="PROSITE-ProRule" id="PRU00967"/>
    </source>
</evidence>
<evidence type="ECO:0000255" key="5">
    <source>
        <dbReference type="PROSITE-ProRule" id="PRU00968"/>
    </source>
</evidence>
<keyword id="KW-0249">Electron transport</keyword>
<keyword id="KW-0349">Heme</keyword>
<keyword id="KW-0408">Iron</keyword>
<keyword id="KW-0472">Membrane</keyword>
<keyword id="KW-0479">Metal-binding</keyword>
<keyword id="KW-0496">Mitochondrion</keyword>
<keyword id="KW-0999">Mitochondrion inner membrane</keyword>
<keyword id="KW-0679">Respiratory chain</keyword>
<keyword id="KW-0812">Transmembrane</keyword>
<keyword id="KW-1133">Transmembrane helix</keyword>
<keyword id="KW-0813">Transport</keyword>
<keyword id="KW-0830">Ubiquinone</keyword>